<dbReference type="EMBL" id="AE003852">
    <property type="protein sequence ID" value="AAF93716.1"/>
    <property type="molecule type" value="Genomic_DNA"/>
</dbReference>
<dbReference type="PIR" id="E82308">
    <property type="entry name" value="E82308"/>
</dbReference>
<dbReference type="RefSeq" id="NP_230199.1">
    <property type="nucleotide sequence ID" value="NC_002505.1"/>
</dbReference>
<dbReference type="RefSeq" id="WP_000906485.1">
    <property type="nucleotide sequence ID" value="NZ_LT906614.1"/>
</dbReference>
<dbReference type="SMR" id="Q9KUH3"/>
<dbReference type="STRING" id="243277.VC_0548"/>
<dbReference type="DNASU" id="2615217"/>
<dbReference type="EnsemblBacteria" id="AAF93716">
    <property type="protein sequence ID" value="AAF93716"/>
    <property type="gene ID" value="VC_0548"/>
</dbReference>
<dbReference type="GeneID" id="94014678"/>
<dbReference type="KEGG" id="vch:VC_0548"/>
<dbReference type="PATRIC" id="fig|243277.26.peg.524"/>
<dbReference type="eggNOG" id="COG1551">
    <property type="taxonomic scope" value="Bacteria"/>
</dbReference>
<dbReference type="HOGENOM" id="CLU_164837_2_1_6"/>
<dbReference type="PHI-base" id="PHI:5061"/>
<dbReference type="Proteomes" id="UP000000584">
    <property type="component" value="Chromosome 1"/>
</dbReference>
<dbReference type="GO" id="GO:0005829">
    <property type="term" value="C:cytosol"/>
    <property type="evidence" value="ECO:0000318"/>
    <property type="project" value="GO_Central"/>
</dbReference>
<dbReference type="GO" id="GO:0048027">
    <property type="term" value="F:mRNA 5'-UTR binding"/>
    <property type="evidence" value="ECO:0007669"/>
    <property type="project" value="UniProtKB-UniRule"/>
</dbReference>
<dbReference type="GO" id="GO:0006402">
    <property type="term" value="P:mRNA catabolic process"/>
    <property type="evidence" value="ECO:0007669"/>
    <property type="project" value="InterPro"/>
</dbReference>
<dbReference type="GO" id="GO:0045947">
    <property type="term" value="P:negative regulation of translational initiation"/>
    <property type="evidence" value="ECO:0007669"/>
    <property type="project" value="UniProtKB-UniRule"/>
</dbReference>
<dbReference type="GO" id="GO:0045948">
    <property type="term" value="P:positive regulation of translational initiation"/>
    <property type="evidence" value="ECO:0007669"/>
    <property type="project" value="UniProtKB-UniRule"/>
</dbReference>
<dbReference type="GO" id="GO:0006109">
    <property type="term" value="P:regulation of carbohydrate metabolic process"/>
    <property type="evidence" value="ECO:0007669"/>
    <property type="project" value="UniProtKB-UniRule"/>
</dbReference>
<dbReference type="FunFam" id="2.60.40.4380:FF:000001">
    <property type="entry name" value="Translational regulator CsrA"/>
    <property type="match status" value="1"/>
</dbReference>
<dbReference type="Gene3D" id="2.60.40.4380">
    <property type="entry name" value="Translational regulator CsrA"/>
    <property type="match status" value="1"/>
</dbReference>
<dbReference type="HAMAP" id="MF_00167">
    <property type="entry name" value="CsrA"/>
    <property type="match status" value="1"/>
</dbReference>
<dbReference type="InterPro" id="IPR003751">
    <property type="entry name" value="CsrA"/>
</dbReference>
<dbReference type="InterPro" id="IPR036107">
    <property type="entry name" value="CsrA_sf"/>
</dbReference>
<dbReference type="NCBIfam" id="TIGR00202">
    <property type="entry name" value="csrA"/>
    <property type="match status" value="1"/>
</dbReference>
<dbReference type="NCBIfam" id="NF002469">
    <property type="entry name" value="PRK01712.1"/>
    <property type="match status" value="1"/>
</dbReference>
<dbReference type="PANTHER" id="PTHR34984">
    <property type="entry name" value="CARBON STORAGE REGULATOR"/>
    <property type="match status" value="1"/>
</dbReference>
<dbReference type="PANTHER" id="PTHR34984:SF1">
    <property type="entry name" value="CARBON STORAGE REGULATOR"/>
    <property type="match status" value="1"/>
</dbReference>
<dbReference type="Pfam" id="PF02599">
    <property type="entry name" value="CsrA"/>
    <property type="match status" value="1"/>
</dbReference>
<dbReference type="SUPFAM" id="SSF117130">
    <property type="entry name" value="CsrA-like"/>
    <property type="match status" value="1"/>
</dbReference>
<accession>Q9KUH3</accession>
<evidence type="ECO:0000255" key="1">
    <source>
        <dbReference type="HAMAP-Rule" id="MF_00167"/>
    </source>
</evidence>
<name>CSRA_VIBCH</name>
<reference key="1">
    <citation type="journal article" date="2000" name="Nature">
        <title>DNA sequence of both chromosomes of the cholera pathogen Vibrio cholerae.</title>
        <authorList>
            <person name="Heidelberg J.F."/>
            <person name="Eisen J.A."/>
            <person name="Nelson W.C."/>
            <person name="Clayton R.A."/>
            <person name="Gwinn M.L."/>
            <person name="Dodson R.J."/>
            <person name="Haft D.H."/>
            <person name="Hickey E.K."/>
            <person name="Peterson J.D."/>
            <person name="Umayam L.A."/>
            <person name="Gill S.R."/>
            <person name="Nelson K.E."/>
            <person name="Read T.D."/>
            <person name="Tettelin H."/>
            <person name="Richardson D.L."/>
            <person name="Ermolaeva M.D."/>
            <person name="Vamathevan J.J."/>
            <person name="Bass S."/>
            <person name="Qin H."/>
            <person name="Dragoi I."/>
            <person name="Sellers P."/>
            <person name="McDonald L.A."/>
            <person name="Utterback T.R."/>
            <person name="Fleischmann R.D."/>
            <person name="Nierman W.C."/>
            <person name="White O."/>
            <person name="Salzberg S.L."/>
            <person name="Smith H.O."/>
            <person name="Colwell R.R."/>
            <person name="Mekalanos J.J."/>
            <person name="Venter J.C."/>
            <person name="Fraser C.M."/>
        </authorList>
    </citation>
    <scope>NUCLEOTIDE SEQUENCE [LARGE SCALE GENOMIC DNA]</scope>
    <source>
        <strain>ATCC 39315 / El Tor Inaba N16961</strain>
    </source>
</reference>
<feature type="chain" id="PRO_0000177095" description="Translational regulator CsrA">
    <location>
        <begin position="1"/>
        <end position="65"/>
    </location>
</feature>
<sequence length="65" mass="7055">MLILTRRVGETLMIGDEVTVTVLGVKGNQVRIGVNAPKEVSVHREEIYMRIQAEKGNGGVASGNY</sequence>
<proteinExistence type="inferred from homology"/>
<organism>
    <name type="scientific">Vibrio cholerae serotype O1 (strain ATCC 39315 / El Tor Inaba N16961)</name>
    <dbReference type="NCBI Taxonomy" id="243277"/>
    <lineage>
        <taxon>Bacteria</taxon>
        <taxon>Pseudomonadati</taxon>
        <taxon>Pseudomonadota</taxon>
        <taxon>Gammaproteobacteria</taxon>
        <taxon>Vibrionales</taxon>
        <taxon>Vibrionaceae</taxon>
        <taxon>Vibrio</taxon>
    </lineage>
</organism>
<protein>
    <recommendedName>
        <fullName evidence="1">Translational regulator CsrA</fullName>
    </recommendedName>
    <alternativeName>
        <fullName evidence="1">Carbon storage regulator</fullName>
    </alternativeName>
</protein>
<comment type="function">
    <text evidence="1">A key translational regulator that binds mRNA to regulate translation initiation and/or mRNA stability. Mediates global changes in gene expression, shifting from rapid growth to stress survival by linking envelope stress, the stringent response and the catabolite repression systems. Usually binds in the 5'-UTR; binding at or near the Shine-Dalgarno sequence prevents ribosome-binding, repressing translation, binding elsewhere in the 5'-UTR can activate translation and/or stabilize the mRNA. Its function is antagonized by small RNA(s).</text>
</comment>
<comment type="subunit">
    <text evidence="1">Homodimer; the beta-strands of each monomer intercalate to form a hydrophobic core, while the alpha-helices form wings that extend away from the core.</text>
</comment>
<comment type="subcellular location">
    <subcellularLocation>
        <location evidence="1">Cytoplasm</location>
    </subcellularLocation>
</comment>
<comment type="similarity">
    <text evidence="1">Belongs to the CsrA/RsmA family.</text>
</comment>
<keyword id="KW-0010">Activator</keyword>
<keyword id="KW-0963">Cytoplasm</keyword>
<keyword id="KW-1185">Reference proteome</keyword>
<keyword id="KW-0678">Repressor</keyword>
<keyword id="KW-0694">RNA-binding</keyword>
<keyword id="KW-0810">Translation regulation</keyword>
<gene>
    <name evidence="1" type="primary">csrA</name>
    <name type="ordered locus">VC_0548</name>
</gene>